<accession>B9L131</accession>
<proteinExistence type="inferred from homology"/>
<sequence length="445" mass="50727">MLDLRLIREHPDLVREALRKLNTEAPLDEILELDERRRQLVAEVEQLKAQRNAESKRIGQLPAGPEREATIAAMRALGDRIEALDRELAAIEERLQALLLEVPNLPDPDVPVGPDESGNVVVRHWGEPRPFDFPVKPHWELAEELGLIDFARGVKIAGSRFYVLRGDLARLQRALIAWMIDLHVNEHGYLEVYPPFLVRREAMIGTGNLPKFGDNLYHDEETDLWLIPTAEVPVTNLFRDEILPPGSLPIYLVAATPCFRKERVSAGRDVRGIKRVHQFEKVEMVKFVEPDRSDEELQRLVADAEDVLRRLELPYRVVQMCTGDLSFTAAKKFDLEVWAPGSQEWLEVSSCSNFRDFQARRANIRYRPSEGARPQFVHTLNGSGLALPRTLIAIMENYQQPDGTIEIPAVLRPYMGGQQRIGRQPAYWEPAQARRAREQARAGDS</sequence>
<evidence type="ECO:0000255" key="1">
    <source>
        <dbReference type="HAMAP-Rule" id="MF_00176"/>
    </source>
</evidence>
<name>SYS_THERP</name>
<protein>
    <recommendedName>
        <fullName evidence="1">Serine--tRNA ligase</fullName>
        <ecNumber evidence="1">6.1.1.11</ecNumber>
    </recommendedName>
    <alternativeName>
        <fullName evidence="1">Seryl-tRNA synthetase</fullName>
        <shortName evidence="1">SerRS</shortName>
    </alternativeName>
    <alternativeName>
        <fullName evidence="1">Seryl-tRNA(Ser/Sec) synthetase</fullName>
    </alternativeName>
</protein>
<feature type="chain" id="PRO_1000199512" description="Serine--tRNA ligase">
    <location>
        <begin position="1"/>
        <end position="445"/>
    </location>
</feature>
<feature type="binding site" evidence="1">
    <location>
        <begin position="229"/>
        <end position="231"/>
    </location>
    <ligand>
        <name>L-serine</name>
        <dbReference type="ChEBI" id="CHEBI:33384"/>
    </ligand>
</feature>
<feature type="binding site" evidence="1">
    <location>
        <begin position="260"/>
        <end position="262"/>
    </location>
    <ligand>
        <name>ATP</name>
        <dbReference type="ChEBI" id="CHEBI:30616"/>
    </ligand>
</feature>
<feature type="binding site" evidence="1">
    <location>
        <position position="276"/>
    </location>
    <ligand>
        <name>ATP</name>
        <dbReference type="ChEBI" id="CHEBI:30616"/>
    </ligand>
</feature>
<feature type="binding site" evidence="1">
    <location>
        <position position="283"/>
    </location>
    <ligand>
        <name>L-serine</name>
        <dbReference type="ChEBI" id="CHEBI:33384"/>
    </ligand>
</feature>
<feature type="binding site" evidence="1">
    <location>
        <begin position="347"/>
        <end position="350"/>
    </location>
    <ligand>
        <name>ATP</name>
        <dbReference type="ChEBI" id="CHEBI:30616"/>
    </ligand>
</feature>
<feature type="binding site" evidence="1">
    <location>
        <position position="383"/>
    </location>
    <ligand>
        <name>L-serine</name>
        <dbReference type="ChEBI" id="CHEBI:33384"/>
    </ligand>
</feature>
<reference key="1">
    <citation type="journal article" date="2009" name="PLoS ONE">
        <title>Complete genome sequence of the aerobic CO-oxidizing thermophile Thermomicrobium roseum.</title>
        <authorList>
            <person name="Wu D."/>
            <person name="Raymond J."/>
            <person name="Wu M."/>
            <person name="Chatterji S."/>
            <person name="Ren Q."/>
            <person name="Graham J.E."/>
            <person name="Bryant D.A."/>
            <person name="Robb F."/>
            <person name="Colman A."/>
            <person name="Tallon L.J."/>
            <person name="Badger J.H."/>
            <person name="Madupu R."/>
            <person name="Ward N.L."/>
            <person name="Eisen J.A."/>
        </authorList>
    </citation>
    <scope>NUCLEOTIDE SEQUENCE [LARGE SCALE GENOMIC DNA]</scope>
    <source>
        <strain>ATCC 27502 / DSM 5159 / P-2</strain>
    </source>
</reference>
<comment type="function">
    <text evidence="1">Catalyzes the attachment of serine to tRNA(Ser). Is also able to aminoacylate tRNA(Sec) with serine, to form the misacylated tRNA L-seryl-tRNA(Sec), which will be further converted into selenocysteinyl-tRNA(Sec).</text>
</comment>
<comment type="catalytic activity">
    <reaction evidence="1">
        <text>tRNA(Ser) + L-serine + ATP = L-seryl-tRNA(Ser) + AMP + diphosphate + H(+)</text>
        <dbReference type="Rhea" id="RHEA:12292"/>
        <dbReference type="Rhea" id="RHEA-COMP:9669"/>
        <dbReference type="Rhea" id="RHEA-COMP:9703"/>
        <dbReference type="ChEBI" id="CHEBI:15378"/>
        <dbReference type="ChEBI" id="CHEBI:30616"/>
        <dbReference type="ChEBI" id="CHEBI:33019"/>
        <dbReference type="ChEBI" id="CHEBI:33384"/>
        <dbReference type="ChEBI" id="CHEBI:78442"/>
        <dbReference type="ChEBI" id="CHEBI:78533"/>
        <dbReference type="ChEBI" id="CHEBI:456215"/>
        <dbReference type="EC" id="6.1.1.11"/>
    </reaction>
</comment>
<comment type="catalytic activity">
    <reaction evidence="1">
        <text>tRNA(Sec) + L-serine + ATP = L-seryl-tRNA(Sec) + AMP + diphosphate + H(+)</text>
        <dbReference type="Rhea" id="RHEA:42580"/>
        <dbReference type="Rhea" id="RHEA-COMP:9742"/>
        <dbReference type="Rhea" id="RHEA-COMP:10128"/>
        <dbReference type="ChEBI" id="CHEBI:15378"/>
        <dbReference type="ChEBI" id="CHEBI:30616"/>
        <dbReference type="ChEBI" id="CHEBI:33019"/>
        <dbReference type="ChEBI" id="CHEBI:33384"/>
        <dbReference type="ChEBI" id="CHEBI:78442"/>
        <dbReference type="ChEBI" id="CHEBI:78533"/>
        <dbReference type="ChEBI" id="CHEBI:456215"/>
        <dbReference type="EC" id="6.1.1.11"/>
    </reaction>
</comment>
<comment type="pathway">
    <text evidence="1">Aminoacyl-tRNA biosynthesis; selenocysteinyl-tRNA(Sec) biosynthesis; L-seryl-tRNA(Sec) from L-serine and tRNA(Sec): step 1/1.</text>
</comment>
<comment type="subunit">
    <text evidence="1">Homodimer. The tRNA molecule binds across the dimer.</text>
</comment>
<comment type="subcellular location">
    <subcellularLocation>
        <location evidence="1">Cytoplasm</location>
    </subcellularLocation>
</comment>
<comment type="domain">
    <text evidence="1">Consists of two distinct domains, a catalytic core and a N-terminal extension that is involved in tRNA binding.</text>
</comment>
<comment type="similarity">
    <text evidence="1">Belongs to the class-II aminoacyl-tRNA synthetase family. Type-1 seryl-tRNA synthetase subfamily.</text>
</comment>
<gene>
    <name evidence="1" type="primary">serS</name>
    <name type="ordered locus">trd_1742</name>
</gene>
<dbReference type="EC" id="6.1.1.11" evidence="1"/>
<dbReference type="EMBL" id="CP001275">
    <property type="protein sequence ID" value="ACM05953.1"/>
    <property type="molecule type" value="Genomic_DNA"/>
</dbReference>
<dbReference type="RefSeq" id="WP_015922684.1">
    <property type="nucleotide sequence ID" value="NC_011959.1"/>
</dbReference>
<dbReference type="SMR" id="B9L131"/>
<dbReference type="STRING" id="309801.trd_1742"/>
<dbReference type="KEGG" id="tro:trd_1742"/>
<dbReference type="eggNOG" id="COG0172">
    <property type="taxonomic scope" value="Bacteria"/>
</dbReference>
<dbReference type="HOGENOM" id="CLU_023797_1_1_0"/>
<dbReference type="OrthoDB" id="9804647at2"/>
<dbReference type="UniPathway" id="UPA00906">
    <property type="reaction ID" value="UER00895"/>
</dbReference>
<dbReference type="Proteomes" id="UP000000447">
    <property type="component" value="Chromosome"/>
</dbReference>
<dbReference type="GO" id="GO:0005737">
    <property type="term" value="C:cytoplasm"/>
    <property type="evidence" value="ECO:0007669"/>
    <property type="project" value="UniProtKB-SubCell"/>
</dbReference>
<dbReference type="GO" id="GO:0005524">
    <property type="term" value="F:ATP binding"/>
    <property type="evidence" value="ECO:0007669"/>
    <property type="project" value="UniProtKB-UniRule"/>
</dbReference>
<dbReference type="GO" id="GO:0004828">
    <property type="term" value="F:serine-tRNA ligase activity"/>
    <property type="evidence" value="ECO:0007669"/>
    <property type="project" value="UniProtKB-UniRule"/>
</dbReference>
<dbReference type="GO" id="GO:0016260">
    <property type="term" value="P:selenocysteine biosynthetic process"/>
    <property type="evidence" value="ECO:0007669"/>
    <property type="project" value="UniProtKB-UniRule"/>
</dbReference>
<dbReference type="GO" id="GO:0006434">
    <property type="term" value="P:seryl-tRNA aminoacylation"/>
    <property type="evidence" value="ECO:0007669"/>
    <property type="project" value="UniProtKB-UniRule"/>
</dbReference>
<dbReference type="CDD" id="cd00770">
    <property type="entry name" value="SerRS_core"/>
    <property type="match status" value="1"/>
</dbReference>
<dbReference type="Gene3D" id="3.30.930.10">
    <property type="entry name" value="Bira Bifunctional Protein, Domain 2"/>
    <property type="match status" value="1"/>
</dbReference>
<dbReference type="Gene3D" id="1.10.287.40">
    <property type="entry name" value="Serine-tRNA synthetase, tRNA binding domain"/>
    <property type="match status" value="1"/>
</dbReference>
<dbReference type="HAMAP" id="MF_00176">
    <property type="entry name" value="Ser_tRNA_synth_type1"/>
    <property type="match status" value="1"/>
</dbReference>
<dbReference type="InterPro" id="IPR002314">
    <property type="entry name" value="aa-tRNA-synt_IIb"/>
</dbReference>
<dbReference type="InterPro" id="IPR006195">
    <property type="entry name" value="aa-tRNA-synth_II"/>
</dbReference>
<dbReference type="InterPro" id="IPR045864">
    <property type="entry name" value="aa-tRNA-synth_II/BPL/LPL"/>
</dbReference>
<dbReference type="InterPro" id="IPR002317">
    <property type="entry name" value="Ser-tRNA-ligase_type_1"/>
</dbReference>
<dbReference type="InterPro" id="IPR015866">
    <property type="entry name" value="Ser-tRNA-synth_1_N"/>
</dbReference>
<dbReference type="InterPro" id="IPR042103">
    <property type="entry name" value="SerRS_1_N_sf"/>
</dbReference>
<dbReference type="InterPro" id="IPR033729">
    <property type="entry name" value="SerRS_core"/>
</dbReference>
<dbReference type="InterPro" id="IPR010978">
    <property type="entry name" value="tRNA-bd_arm"/>
</dbReference>
<dbReference type="NCBIfam" id="TIGR00414">
    <property type="entry name" value="serS"/>
    <property type="match status" value="1"/>
</dbReference>
<dbReference type="PANTHER" id="PTHR43697:SF1">
    <property type="entry name" value="SERINE--TRNA LIGASE"/>
    <property type="match status" value="1"/>
</dbReference>
<dbReference type="PANTHER" id="PTHR43697">
    <property type="entry name" value="SERYL-TRNA SYNTHETASE"/>
    <property type="match status" value="1"/>
</dbReference>
<dbReference type="Pfam" id="PF02403">
    <property type="entry name" value="Seryl_tRNA_N"/>
    <property type="match status" value="1"/>
</dbReference>
<dbReference type="Pfam" id="PF00587">
    <property type="entry name" value="tRNA-synt_2b"/>
    <property type="match status" value="1"/>
</dbReference>
<dbReference type="PIRSF" id="PIRSF001529">
    <property type="entry name" value="Ser-tRNA-synth_IIa"/>
    <property type="match status" value="1"/>
</dbReference>
<dbReference type="PRINTS" id="PR00981">
    <property type="entry name" value="TRNASYNTHSER"/>
</dbReference>
<dbReference type="SUPFAM" id="SSF55681">
    <property type="entry name" value="Class II aaRS and biotin synthetases"/>
    <property type="match status" value="1"/>
</dbReference>
<dbReference type="SUPFAM" id="SSF46589">
    <property type="entry name" value="tRNA-binding arm"/>
    <property type="match status" value="1"/>
</dbReference>
<dbReference type="PROSITE" id="PS50862">
    <property type="entry name" value="AA_TRNA_LIGASE_II"/>
    <property type="match status" value="1"/>
</dbReference>
<keyword id="KW-0030">Aminoacyl-tRNA synthetase</keyword>
<keyword id="KW-0067">ATP-binding</keyword>
<keyword id="KW-0963">Cytoplasm</keyword>
<keyword id="KW-0436">Ligase</keyword>
<keyword id="KW-0547">Nucleotide-binding</keyword>
<keyword id="KW-0648">Protein biosynthesis</keyword>
<keyword id="KW-1185">Reference proteome</keyword>
<organism>
    <name type="scientific">Thermomicrobium roseum (strain ATCC 27502 / DSM 5159 / P-2)</name>
    <dbReference type="NCBI Taxonomy" id="309801"/>
    <lineage>
        <taxon>Bacteria</taxon>
        <taxon>Pseudomonadati</taxon>
        <taxon>Thermomicrobiota</taxon>
        <taxon>Thermomicrobia</taxon>
        <taxon>Thermomicrobiales</taxon>
        <taxon>Thermomicrobiaceae</taxon>
        <taxon>Thermomicrobium</taxon>
    </lineage>
</organism>